<evidence type="ECO:0000250" key="1">
    <source>
        <dbReference type="UniProtKB" id="A1YYW7"/>
    </source>
</evidence>
<evidence type="ECO:0000255" key="2"/>
<evidence type="ECO:0000269" key="3">
    <source>
    </source>
</evidence>
<evidence type="ECO:0000269" key="4">
    <source>
    </source>
</evidence>
<evidence type="ECO:0000269" key="5">
    <source>
    </source>
</evidence>
<evidence type="ECO:0000303" key="6">
    <source>
    </source>
</evidence>
<evidence type="ECO:0000303" key="7">
    <source>
    </source>
</evidence>
<evidence type="ECO:0000303" key="8">
    <source>
    </source>
</evidence>
<evidence type="ECO:0000305" key="9"/>
<evidence type="ECO:0000312" key="10">
    <source>
        <dbReference type="EMBL" id="AAC41526.1"/>
    </source>
</evidence>
<organism>
    <name type="scientific">Myroides odoratus</name>
    <name type="common">Flavobacterium odoratum</name>
    <dbReference type="NCBI Taxonomy" id="256"/>
    <lineage>
        <taxon>Bacteria</taxon>
        <taxon>Pseudomonadati</taxon>
        <taxon>Bacteroidota</taxon>
        <taxon>Flavobacteriia</taxon>
        <taxon>Flavobacteriales</taxon>
        <taxon>Flavobacteriaceae</taxon>
        <taxon>Myroides</taxon>
    </lineage>
</organism>
<name>CDA_MYROD</name>
<reference evidence="9 10" key="1">
    <citation type="journal article" date="1996" name="J. Biol. Chem.">
        <title>Cloning and expression of the unique Ca2+-ATPase from Flavobacterium odoratum.</title>
        <authorList>
            <person name="Peiffer W.E."/>
            <person name="Desrosiers M.G."/>
            <person name="Menick D.R."/>
        </authorList>
    </citation>
    <scope>NUCLEOTIDE SEQUENCE [GENOMIC DNA]</scope>
    <scope>FUNCTION</scope>
    <scope>COFACTOR</scope>
    <scope>ACTIVITY REGULATION</scope>
    <scope>SUBCELLULAR LOCATION</scope>
    <scope>MOTIF</scope>
    <source>
        <strain evidence="10">ATCC 29979 / DSM 2802 / NCTC 11179 / CL41/66</strain>
    </source>
</reference>
<reference evidence="9" key="2">
    <citation type="journal article" date="1996" name="J. Biol. Chem.">
        <title>Purification and characterization of the Ca2+-ATPase of Flavobacterium odoratum.</title>
        <authorList>
            <person name="Desrosiers M.G."/>
            <person name="Gately L.J."/>
            <person name="Gambel A.M."/>
            <person name="Menick D.R."/>
        </authorList>
    </citation>
    <scope>PROTEIN SEQUENCE OF 22-43</scope>
    <scope>FUNCTION</scope>
    <scope>COFACTOR</scope>
    <scope>ACTIVITY REGULATION</scope>
    <scope>BIOPHYSICOCHEMICAL PROPERTIES</scope>
    <scope>SUBCELLULAR LOCATION</scope>
    <source>
        <strain evidence="5">ATCC 29979 / DSM 2802 / NCTC 11179 / CL41/66</strain>
    </source>
</reference>
<reference evidence="9" key="3">
    <citation type="journal article" date="1992" name="J. Biol. Chem.">
        <title>Characterization of a P-type Ca(2+)-ATPase from Flavobacterium odoratum.</title>
        <authorList>
            <person name="Gambel A.M."/>
            <person name="Desrosiers M.G."/>
            <person name="Menick D.R."/>
        </authorList>
    </citation>
    <scope>FUNCTION</scope>
    <scope>CATALYTIC ACTIVITY</scope>
    <scope>COFACTOR</scope>
    <scope>ACTIVITY REGULATION</scope>
    <scope>SUBCELLULAR LOCATION</scope>
    <source>
        <strain evidence="3">ATCC 29979 / DSM 2802 / NCTC 11179 / CL41/66</strain>
        <strain evidence="3">ATCC 4651 / DSM 2801 / BCRC 10678 / JCM 7458 / NBRC 14945 / NCTC 11036</strain>
    </source>
</reference>
<keyword id="KW-0067">ATP-binding</keyword>
<keyword id="KW-0106">Calcium</keyword>
<keyword id="KW-0109">Calcium transport</keyword>
<keyword id="KW-0997">Cell inner membrane</keyword>
<keyword id="KW-1003">Cell membrane</keyword>
<keyword id="KW-0903">Direct protein sequencing</keyword>
<keyword id="KW-0406">Ion transport</keyword>
<keyword id="KW-0460">Magnesium</keyword>
<keyword id="KW-0472">Membrane</keyword>
<keyword id="KW-0479">Metal-binding</keyword>
<keyword id="KW-0547">Nucleotide-binding</keyword>
<keyword id="KW-0597">Phosphoprotein</keyword>
<keyword id="KW-0732">Signal</keyword>
<keyword id="KW-1278">Translocase</keyword>
<keyword id="KW-0813">Transport</keyword>
<dbReference type="EC" id="7.2.2.10" evidence="3"/>
<dbReference type="EMBL" id="L42816">
    <property type="protein sequence ID" value="AAC41526.1"/>
    <property type="status" value="ALT_INIT"/>
    <property type="molecule type" value="Genomic_DNA"/>
</dbReference>
<dbReference type="SMR" id="Q47910"/>
<dbReference type="GO" id="GO:0009897">
    <property type="term" value="C:external side of plasma membrane"/>
    <property type="evidence" value="ECO:0000314"/>
    <property type="project" value="UniProtKB"/>
</dbReference>
<dbReference type="GO" id="GO:0016020">
    <property type="term" value="C:membrane"/>
    <property type="evidence" value="ECO:0000314"/>
    <property type="project" value="UniProtKB"/>
</dbReference>
<dbReference type="GO" id="GO:0004035">
    <property type="term" value="F:alkaline phosphatase activity"/>
    <property type="evidence" value="ECO:0007669"/>
    <property type="project" value="InterPro"/>
</dbReference>
<dbReference type="GO" id="GO:0005524">
    <property type="term" value="F:ATP binding"/>
    <property type="evidence" value="ECO:0007669"/>
    <property type="project" value="UniProtKB-KW"/>
</dbReference>
<dbReference type="GO" id="GO:0016887">
    <property type="term" value="F:ATP hydrolysis activity"/>
    <property type="evidence" value="ECO:0000314"/>
    <property type="project" value="UniProtKB"/>
</dbReference>
<dbReference type="GO" id="GO:0046872">
    <property type="term" value="F:metal ion binding"/>
    <property type="evidence" value="ECO:0000314"/>
    <property type="project" value="UniProtKB"/>
</dbReference>
<dbReference type="GO" id="GO:0005388">
    <property type="term" value="F:P-type calcium transporter activity"/>
    <property type="evidence" value="ECO:0000314"/>
    <property type="project" value="UniProtKB"/>
</dbReference>
<dbReference type="GO" id="GO:0070588">
    <property type="term" value="P:calcium ion transmembrane transport"/>
    <property type="evidence" value="ECO:0000314"/>
    <property type="project" value="UniProtKB"/>
</dbReference>
<dbReference type="GO" id="GO:0006816">
    <property type="term" value="P:calcium ion transport"/>
    <property type="evidence" value="ECO:0000314"/>
    <property type="project" value="UniProtKB"/>
</dbReference>
<dbReference type="GO" id="GO:0071286">
    <property type="term" value="P:cellular response to magnesium ion"/>
    <property type="evidence" value="ECO:0000314"/>
    <property type="project" value="UniProtKB"/>
</dbReference>
<dbReference type="CDD" id="cd16016">
    <property type="entry name" value="AP-SPAP"/>
    <property type="match status" value="1"/>
</dbReference>
<dbReference type="Gene3D" id="3.30.1360.150">
    <property type="match status" value="1"/>
</dbReference>
<dbReference type="Gene3D" id="3.40.720.10">
    <property type="entry name" value="Alkaline Phosphatase, subunit A"/>
    <property type="match status" value="1"/>
</dbReference>
<dbReference type="InterPro" id="IPR017850">
    <property type="entry name" value="Alkaline_phosphatase_core_sf"/>
</dbReference>
<dbReference type="InterPro" id="IPR026263">
    <property type="entry name" value="Alkaline_phosphatase_prok"/>
</dbReference>
<dbReference type="InterPro" id="IPR002591">
    <property type="entry name" value="Phosphodiest/P_Trfase"/>
</dbReference>
<dbReference type="NCBIfam" id="NF042991">
    <property type="entry name" value="alk_phos_PafA"/>
    <property type="match status" value="1"/>
</dbReference>
<dbReference type="PANTHER" id="PTHR10151:SF120">
    <property type="entry name" value="BIS(5'-ADENOSYL)-TRIPHOSPHATASE"/>
    <property type="match status" value="1"/>
</dbReference>
<dbReference type="PANTHER" id="PTHR10151">
    <property type="entry name" value="ECTONUCLEOTIDE PYROPHOSPHATASE/PHOSPHODIESTERASE"/>
    <property type="match status" value="1"/>
</dbReference>
<dbReference type="Pfam" id="PF01663">
    <property type="entry name" value="Phosphodiest"/>
    <property type="match status" value="1"/>
</dbReference>
<dbReference type="PIRSF" id="PIRSF031924">
    <property type="entry name" value="Pi-irrepressible_AP"/>
    <property type="match status" value="1"/>
</dbReference>
<dbReference type="SUPFAM" id="SSF53649">
    <property type="entry name" value="Alkaline phosphatase-like"/>
    <property type="match status" value="1"/>
</dbReference>
<feature type="signal peptide" evidence="5">
    <location>
        <begin position="1"/>
        <end position="21"/>
    </location>
</feature>
<feature type="chain" id="PRO_0000425600" description="Calcium-transporting ATPase" evidence="5">
    <location>
        <begin position="22"/>
        <end position="548"/>
    </location>
</feature>
<feature type="short sequence motif" description="ATP-binding" evidence="2 7">
    <location>
        <begin position="179"/>
        <end position="187"/>
    </location>
</feature>
<feature type="active site" description="Phosphothreonine intermediate" evidence="1">
    <location>
        <position position="78"/>
    </location>
</feature>
<feature type="binding site" evidence="1">
    <location>
        <position position="37"/>
    </location>
    <ligand>
        <name>a divalent metal cation</name>
        <dbReference type="ChEBI" id="CHEBI:60240"/>
        <label>1</label>
    </ligand>
</feature>
<feature type="binding site" evidence="1">
    <location>
        <position position="78"/>
    </location>
    <ligand>
        <name>a divalent metal cation</name>
        <dbReference type="ChEBI" id="CHEBI:60240"/>
        <label>1</label>
    </ligand>
</feature>
<feature type="binding site" evidence="1">
    <location>
        <position position="99"/>
    </location>
    <ligand>
        <name>substrate</name>
    </ligand>
</feature>
<feature type="binding site" evidence="1">
    <location>
        <begin position="160"/>
        <end position="162"/>
    </location>
    <ligand>
        <name>substrate</name>
    </ligand>
</feature>
<feature type="binding site" evidence="1">
    <location>
        <position position="305"/>
    </location>
    <ligand>
        <name>a divalent metal cation</name>
        <dbReference type="ChEBI" id="CHEBI:60240"/>
        <label>2</label>
    </ligand>
</feature>
<feature type="binding site" evidence="1">
    <location>
        <position position="309"/>
    </location>
    <ligand>
        <name>a divalent metal cation</name>
        <dbReference type="ChEBI" id="CHEBI:60240"/>
        <label>2</label>
    </ligand>
</feature>
<feature type="binding site" evidence="1">
    <location>
        <position position="352"/>
    </location>
    <ligand>
        <name>a divalent metal cation</name>
        <dbReference type="ChEBI" id="CHEBI:60240"/>
        <label>1</label>
    </ligand>
</feature>
<feature type="binding site" evidence="1">
    <location>
        <position position="353"/>
    </location>
    <ligand>
        <name>a divalent metal cation</name>
        <dbReference type="ChEBI" id="CHEBI:60240"/>
        <label>1</label>
    </ligand>
</feature>
<feature type="binding site" evidence="1">
    <location>
        <position position="488"/>
    </location>
    <ligand>
        <name>a divalent metal cation</name>
        <dbReference type="ChEBI" id="CHEBI:60240"/>
        <label>2</label>
    </ligand>
</feature>
<proteinExistence type="evidence at protein level"/>
<sequence>MNFKSTVITAMCCFFSFAVLASEKLEKPKLVVGLVVDQMRWDYLYRYYDRYSENGFKRLLNEGFSSENTLIDYVPTYTAIGHSTIYTGSVPAINGIAGNDFIIQATGQNMYCTQDDSVQAVGGEGKVGQQSPKNLLVSTITDQLKLATNFQSKVIGIAIKDRGGILPAGHFANAAYWLDGKTGDWITSTYYMKDLPKWVKGFNKEKVVDQYYKQGWKTLYPIDTYVLSTADDNLYEETFKGEKTPTFPRDLVKLKKENGYELIKSTPQGNTLTLDFAKRAIENEQLGNNPLQVTDFLAVSLSSTDYIGHQFAINSIEIEDTYLRLDRDIADFLAYLDQNIGKGNYTLFLSADHGAAHNPKFFADQKGNSGYFDTKAIRKDLNEKLASKFGVADLVKSLANYQVHLNYEVIEANDVEEDEVIAAAIKLLKKVDGVAFVVDMNEAAESSVPQILRERIINGYNFKRSGAIQLILEPQWFSGSKDGKGTTHGSWNSYDAHIPAVFLGWGVKPGKTTRQTHMTDIAPTIAQILKIEFPNGNIGTPIQEAIEQ</sequence>
<protein>
    <recommendedName>
        <fullName evidence="6">Calcium-transporting ATPase</fullName>
        <ecNumber evidence="3">7.2.2.10</ecNumber>
    </recommendedName>
    <alternativeName>
        <fullName evidence="6 7 8 10">Ca(2+)-ATPase</fullName>
    </alternativeName>
    <alternativeName>
        <fullName evidence="6 8">Calcium pump</fullName>
    </alternativeName>
    <alternativeName>
        <fullName evidence="7">Calcium-dependent ATPase</fullName>
    </alternativeName>
</protein>
<gene>
    <name evidence="7" type="primary">cda</name>
</gene>
<comment type="function">
    <text evidence="3 4 5">Catalyzes the hydrolysis of ATP coupled with the transport of calcium. Has some hydrolysis activity also with dATP, GTP, UTP, ITP and 4-nitrophenyl phosphate as substrate. No activity with ADP, CTP, acetyl dihydrogen phosphate or AMP-PNP as substrate.</text>
</comment>
<comment type="catalytic activity">
    <reaction evidence="3">
        <text>Ca(2+)(in) + ATP + H2O = Ca(2+)(out) + ADP + phosphate + H(+)</text>
        <dbReference type="Rhea" id="RHEA:18105"/>
        <dbReference type="ChEBI" id="CHEBI:15377"/>
        <dbReference type="ChEBI" id="CHEBI:15378"/>
        <dbReference type="ChEBI" id="CHEBI:29108"/>
        <dbReference type="ChEBI" id="CHEBI:30616"/>
        <dbReference type="ChEBI" id="CHEBI:43474"/>
        <dbReference type="ChEBI" id="CHEBI:456216"/>
        <dbReference type="EC" id="7.2.2.10"/>
    </reaction>
</comment>
<comment type="cofactor">
    <cofactor evidence="3 4 5">
        <name>Mg(2+)</name>
        <dbReference type="ChEBI" id="CHEBI:18420"/>
    </cofactor>
</comment>
<comment type="activity regulation">
    <text evidence="3 4 5">Completely inhibited by vanadate(3-). Also inhibited by lanthanoid atom and phosphate. Not inhibited by N-ethylmaleimide, 1,3-dicyclohexylcarbodiimide, oligomycin, ouabain, valinomycin, nigericin, thapsigargin, cyclopiazonic acid or fluorescein isothiocyanate.</text>
</comment>
<comment type="biophysicochemical properties">
    <kinetics>
        <KM evidence="5">1.5 uM for calcium (at 8 degrees Celsius)</KM>
        <KM evidence="5">90 uM for ATP (at 8 degrees Celsius)</KM>
        <Vmax evidence="5">75.0 umol/min/mg enzyme toward ATP (at 8 degrees Celsius)</Vmax>
    </kinetics>
    <phDependence>
        <text evidence="5">Optimum pH is 8.0 for ATP hydrolysis activity. Loses 50% of the activity at pH 7.0 or 8.5, has less than 20% activity at pH 6.5 and virtually no activity at pH 9.0.</text>
    </phDependence>
</comment>
<comment type="subcellular location">
    <subcellularLocation>
        <location evidence="3 4 5">Cell inner membrane</location>
        <topology evidence="3 4 5">Peripheral membrane protein</topology>
        <orientation evidence="3 4 5">Periplasmic side</orientation>
    </subcellularLocation>
</comment>
<comment type="sequence caution" evidence="9">
    <conflict type="erroneous initiation">
        <sequence resource="EMBL-CDS" id="AAC41526"/>
    </conflict>
    <text>Extended N-terminus.</text>
</comment>
<accession>Q47910</accession>